<organism>
    <name type="scientific">Phytophthora sojae (strain P6497)</name>
    <name type="common">Soybean stem and root rot agent</name>
    <name type="synonym">Phytophthora megasperma f. sp. glycines</name>
    <dbReference type="NCBI Taxonomy" id="1094619"/>
    <lineage>
        <taxon>Eukaryota</taxon>
        <taxon>Sar</taxon>
        <taxon>Stramenopiles</taxon>
        <taxon>Oomycota</taxon>
        <taxon>Peronosporales</taxon>
        <taxon>Peronosporaceae</taxon>
        <taxon>Phytophthora</taxon>
    </lineage>
</organism>
<accession>G4YRX5</accession>
<sequence length="106" mass="12304">MRLTYVLLVAVTTLLVSCDATKPSTEATAVSKRLLRFVEAADEEERRIDFSPEKLRKMLGDETYRLKKFGKWDSDGHTFDGLKHYLLLSDSSMVKLRNMYKAWLEQ</sequence>
<reference key="1">
    <citation type="journal article" date="2006" name="Science">
        <title>Phytophthora genome sequences uncover evolutionary origins and mechanisms of pathogenesis.</title>
        <authorList>
            <person name="Tyler B.M."/>
            <person name="Tripathy S."/>
            <person name="Zhang X."/>
            <person name="Dehal P."/>
            <person name="Jiang R.H.Y."/>
            <person name="Aerts A."/>
            <person name="Arredondo F.D."/>
            <person name="Baxter L."/>
            <person name="Bensasson D."/>
            <person name="Beynon J.L."/>
            <person name="Chapman J."/>
            <person name="Damasceno C.M.B."/>
            <person name="Dorrance A.E."/>
            <person name="Dou D."/>
            <person name="Dickerman A.W."/>
            <person name="Dubchak I.L."/>
            <person name="Garbelotto M."/>
            <person name="Gijzen M."/>
            <person name="Gordon S.G."/>
            <person name="Govers F."/>
            <person name="Grunwald N.J."/>
            <person name="Huang W."/>
            <person name="Ivors K.L."/>
            <person name="Jones R.W."/>
            <person name="Kamoun S."/>
            <person name="Krampis K."/>
            <person name="Lamour K.H."/>
            <person name="Lee M.-K."/>
            <person name="McDonald W.H."/>
            <person name="Medina M."/>
            <person name="Meijer H.J.G."/>
            <person name="Nordberg E.K."/>
            <person name="Maclean D.J."/>
            <person name="Ospina-Giraldo M.D."/>
            <person name="Morris P.F."/>
            <person name="Phuntumart V."/>
            <person name="Putnam N.H."/>
            <person name="Rash S."/>
            <person name="Rose J.K.C."/>
            <person name="Sakihama Y."/>
            <person name="Salamov A.A."/>
            <person name="Savidor A."/>
            <person name="Scheuring C.F."/>
            <person name="Smith B.M."/>
            <person name="Sobral B.W.S."/>
            <person name="Terry A."/>
            <person name="Torto-Alalibo T.A."/>
            <person name="Win J."/>
            <person name="Xu Z."/>
            <person name="Zhang H."/>
            <person name="Grigoriev I.V."/>
            <person name="Rokhsar D.S."/>
            <person name="Boore J.L."/>
        </authorList>
    </citation>
    <scope>NUCLEOTIDE SEQUENCE [LARGE SCALE GENOMIC DNA]</scope>
    <source>
        <strain>P6497</strain>
    </source>
</reference>
<reference key="2">
    <citation type="journal article" date="2011" name="Plant Cell">
        <title>Transcriptional programming and functional interactions within the Phytophthora sojae RXLR effector repertoire.</title>
        <authorList>
            <person name="Wang Q."/>
            <person name="Han C."/>
            <person name="Ferreira A.O."/>
            <person name="Yu X."/>
            <person name="Ye W."/>
            <person name="Tripathy S."/>
            <person name="Kale S.D."/>
            <person name="Gu B."/>
            <person name="Sheng Y."/>
            <person name="Sui Y."/>
            <person name="Wang X."/>
            <person name="Zhang Z."/>
            <person name="Cheng B."/>
            <person name="Dong S."/>
            <person name="Shan W."/>
            <person name="Zheng X."/>
            <person name="Dou D."/>
            <person name="Tyler B.M."/>
            <person name="Wang Y."/>
        </authorList>
    </citation>
    <scope>IDENTIFICATION</scope>
    <scope>DOMAIN</scope>
</reference>
<reference key="3">
    <citation type="journal article" date="2013" name="Nat. Genet.">
        <title>Oomycete pathogens encode RNA silencing suppressors.</title>
        <authorList>
            <person name="Qiao Y."/>
            <person name="Liu L."/>
            <person name="Xiong Q."/>
            <person name="Flores C."/>
            <person name="Wong J."/>
            <person name="Shi J."/>
            <person name="Wang X."/>
            <person name="Liu X."/>
            <person name="Xiang Q."/>
            <person name="Jiang S."/>
            <person name="Zhang F."/>
            <person name="Wang Y."/>
            <person name="Judelson H.S."/>
            <person name="Chen X."/>
            <person name="Ma W."/>
        </authorList>
    </citation>
    <scope>FUNCTION</scope>
    <scope>DOMAIN</scope>
    <scope>SUBCELLULAR LOCATION</scope>
    <scope>MUTAGENESIS OF 56-ARG--PHE-69</scope>
</reference>
<reference key="4">
    <citation type="journal article" date="2015" name="Proc. Natl. Acad. Sci. U.S.A.">
        <title>Phytophthora effector targets a novel component of small RNA pathway in plants to promote infection.</title>
        <authorList>
            <person name="Qiao Y."/>
            <person name="Shi J."/>
            <person name="Zhai Y."/>
            <person name="Hou Y."/>
            <person name="Ma W."/>
        </authorList>
    </citation>
    <scope>FUNCTION</scope>
    <scope>INTERACTION WITH HOST PINP1</scope>
</reference>
<reference key="5">
    <citation type="journal article" date="2017" name="Fungal Biol.">
        <title>Intrinsic disorder is a common structural characteristic of RxLR effectors in oomycete pathogens.</title>
        <authorList>
            <person name="Shen D."/>
            <person name="Li Q."/>
            <person name="Sun P."/>
            <person name="Zhang M."/>
            <person name="Dou D."/>
        </authorList>
    </citation>
    <scope>DOMAIN</scope>
    <scope>FUNCTION</scope>
    <scope>MUTAGENESIS OF LYS-32; GLU-39; GLU-43; LYS-54; LYS-57 AND GLU-62</scope>
</reference>
<reference key="6">
    <citation type="journal article" date="2019" name="New Phytol.">
        <title>The WY domain in the Phytophthora effector PSR1 is required for infection and RNA silencing suppression activity.</title>
        <authorList>
            <person name="Zhang P."/>
            <person name="Jia Y."/>
            <person name="Shi J."/>
            <person name="Chen C."/>
            <person name="Ye W."/>
            <person name="Wang Y."/>
            <person name="Ma W."/>
            <person name="Qiao Y."/>
        </authorList>
    </citation>
    <scope>FUNCTION</scope>
    <scope>DOMAIN</scope>
    <scope>MUTAGENESIS OF TRP-72 AND TYR-100</scope>
</reference>
<proteinExistence type="evidence at protein level"/>
<comment type="function">
    <text evidence="2 3 4 5">Secreted effector that possesses RNA silencing suppression activity by inhibiting the biogenesis of small RNAs in the host plant to promote enhanced susceptibility of host to the pathogen during infection (PubMed:23377181, PubMed:25902521, PubMed:29029698, PubMed:30963588). Interferes with secondary siRNA production by associating with host nuclear protein PINP1 that acts as a regulator of the accumulation of both microRNAs and endogenous small interfering RNAs (PubMed:25902521).</text>
</comment>
<comment type="subunit">
    <text evidence="3">Interacts with host PINP1.</text>
</comment>
<comment type="subcellular location">
    <subcellularLocation>
        <location evidence="3">Secreted</location>
    </subcellularLocation>
    <subcellularLocation>
        <location evidence="3">Host nucleus</location>
    </subcellularLocation>
    <text evidence="3">The nuclear localization is required for this interaction.</text>
</comment>
<comment type="domain">
    <text evidence="9">The RxLR-dEER motif acts to carry the protein into the host cell cytoplasm through binding to cell surface phosphatidylinositol-3-phosphate.</text>
</comment>
<comment type="domain">
    <text evidence="2">The nuclear localization signal (NLS) is required for localization to the host nucleus and RNA silencing suppression activity.</text>
</comment>
<comment type="domain">
    <text evidence="5">The single WY domain is required for binding to host PINP1 and subsequent RNA-silencing suppression activity, pathogenicity and perturbation of plant development.</text>
</comment>
<comment type="domain">
    <text evidence="4">The disordered structure between residues 29 and 65 contributes to the effector function in cell death activation.</text>
</comment>
<comment type="similarity">
    <text evidence="8">Belongs to the RxLR effector family.</text>
</comment>
<protein>
    <recommendedName>
        <fullName evidence="6">RxLR effector protein PSR1</fullName>
    </recommendedName>
    <alternativeName>
        <fullName evidence="6">Avirulence homolog protein 18</fullName>
    </alternativeName>
    <alternativeName>
        <fullName evidence="7">Suppressor of RNA silencing protein 1</fullName>
    </alternativeName>
</protein>
<dbReference type="EMBL" id="JH159152">
    <property type="protein sequence ID" value="EGZ22952.1"/>
    <property type="molecule type" value="Genomic_DNA"/>
</dbReference>
<dbReference type="STRING" id="1094619.G4YRX5"/>
<dbReference type="EnsemblProtists" id="EGZ22952">
    <property type="protein sequence ID" value="EGZ22952"/>
    <property type="gene ID" value="PHYSODRAFT_284677"/>
</dbReference>
<dbReference type="KEGG" id="psoj:PHYSODRAFT_284677"/>
<dbReference type="InParanoid" id="G4YRX5"/>
<dbReference type="Proteomes" id="UP000002640">
    <property type="component" value="Unassembled WGS sequence"/>
</dbReference>
<dbReference type="GO" id="GO:0005576">
    <property type="term" value="C:extracellular region"/>
    <property type="evidence" value="ECO:0007669"/>
    <property type="project" value="UniProtKB-SubCell"/>
</dbReference>
<dbReference type="GO" id="GO:0042025">
    <property type="term" value="C:host cell nucleus"/>
    <property type="evidence" value="ECO:0007669"/>
    <property type="project" value="UniProtKB-SubCell"/>
</dbReference>
<dbReference type="InterPro" id="IPR031825">
    <property type="entry name" value="RXLR"/>
</dbReference>
<dbReference type="Pfam" id="PF16810">
    <property type="entry name" value="RXLR"/>
    <property type="match status" value="1"/>
</dbReference>
<name>PSR1_PHYSP</name>
<gene>
    <name evidence="7" type="primary">PSR1</name>
    <name evidence="6" type="synonym">Avh18</name>
    <name type="ORF">PHYSODRAFT_284677</name>
</gene>
<keyword id="KW-1048">Host nucleus</keyword>
<keyword id="KW-1185">Reference proteome</keyword>
<keyword id="KW-0964">Secreted</keyword>
<keyword id="KW-0732">Signal</keyword>
<keyword id="KW-0843">Virulence</keyword>
<feature type="signal peptide" evidence="1">
    <location>
        <begin position="1"/>
        <end position="20"/>
    </location>
</feature>
<feature type="chain" id="PRO_5003471535" description="RxLR effector protein PSR1">
    <location>
        <begin position="21"/>
        <end position="106"/>
    </location>
</feature>
<feature type="region of interest" description="Disordered" evidence="10">
    <location>
        <begin position="29"/>
        <end position="65"/>
    </location>
</feature>
<feature type="region of interest" description="WY domain" evidence="11">
    <location>
        <begin position="50"/>
        <end position="106"/>
    </location>
</feature>
<feature type="short sequence motif" description="RxLR-dEER" evidence="9">
    <location>
        <begin position="33"/>
        <end position="46"/>
    </location>
</feature>
<feature type="short sequence motif" description="Bipartite nuclear localization signal (NLS)" evidence="2">
    <location>
        <begin position="56"/>
        <end position="69"/>
    </location>
</feature>
<feature type="mutagenesis site" description="Leads to the transition from disordered structure to ordered structure and abolishes the function in cell death activation; when associated with A-39, A-43, A-54, A-57 and A-62." evidence="4">
    <original>K</original>
    <variation>A</variation>
    <location>
        <position position="32"/>
    </location>
</feature>
<feature type="mutagenesis site" description="Leads to the transition from disordered structure to ordered structure and abolishes the function in cell death activation; when associated with A-32, A-43, A-54, A-57 and A-62." evidence="4">
    <original>E</original>
    <variation>A</variation>
    <location>
        <position position="39"/>
    </location>
</feature>
<feature type="mutagenesis site" description="Leads to the transition from disordered structure to ordered structure and abolishes the function in cell death activation; when associated with A-32, A-39, A-54, A-57 and A-62." evidence="4">
    <original>E</original>
    <variation>A</variation>
    <location>
        <position position="43"/>
    </location>
</feature>
<feature type="mutagenesis site" description="Leads to the transition from disordered structure to ordered structure and abolishes the function in cell death activation; when associated with A-32, A-39, A-43, A-57 and A-62." evidence="4">
    <original>K</original>
    <variation>A</variation>
    <location>
        <position position="54"/>
    </location>
</feature>
<feature type="mutagenesis site" description="Loses the nuclear localization as well as the RNA silencing suppression activity." evidence="2">
    <original>RKMLGDETYRLKKF</original>
    <variation>AAAAAAAAAAAAAA</variation>
    <location>
        <begin position="56"/>
        <end position="69"/>
    </location>
</feature>
<feature type="mutagenesis site" description="Leads to the transition from disordered structure to ordered structure and abolishes the function in cell death activation; when associated with A-32, A-39, A-43, A-54 and A-62." evidence="4">
    <original>K</original>
    <variation>A</variation>
    <location>
        <position position="57"/>
    </location>
</feature>
<feature type="mutagenesis site" description="Leads to the transition from disordered structure to ordered structure and abolishes the function in cell death activation; when associated with A-32, A-39, A-43, A-54 and A-57." evidence="4">
    <original>E</original>
    <variation>A</variation>
    <location>
        <position position="62"/>
    </location>
</feature>
<feature type="mutagenesis site" description="Abolishes the interaction with host target PINP1 and lowers the size of lesions in leaves after infection." evidence="5">
    <original>W</original>
    <variation>A</variation>
    <location>
        <position position="72"/>
    </location>
</feature>
<feature type="mutagenesis site" description="Abolishes the interaction with host target PINP1 and lowers the size of lesions in leaves after infection." evidence="5">
    <original>Y</original>
    <variation>A</variation>
    <location>
        <position position="100"/>
    </location>
</feature>
<evidence type="ECO:0000255" key="1"/>
<evidence type="ECO:0000269" key="2">
    <source>
    </source>
</evidence>
<evidence type="ECO:0000269" key="3">
    <source>
    </source>
</evidence>
<evidence type="ECO:0000269" key="4">
    <source>
    </source>
</evidence>
<evidence type="ECO:0000269" key="5">
    <source>
    </source>
</evidence>
<evidence type="ECO:0000303" key="6">
    <source>
    </source>
</evidence>
<evidence type="ECO:0000303" key="7">
    <source>
    </source>
</evidence>
<evidence type="ECO:0000305" key="8"/>
<evidence type="ECO:0000305" key="9">
    <source>
    </source>
</evidence>
<evidence type="ECO:0000305" key="10">
    <source>
    </source>
</evidence>
<evidence type="ECO:0000305" key="11">
    <source>
    </source>
</evidence>